<sequence>MLQPKRRKYRKEQKGRNTGKATRGNAVSFGEFGLKAIGRGRLTARQIEAARRAMTRHIKRGGRIWIRIFPDKPISQKPAEVRMGNGKGNPEYYVAEIQPGKMLYEMDGVTEELAREAFRLAAAKLPLKTAFIVRQLGA</sequence>
<reference key="1">
    <citation type="submission" date="2006-05" db="EMBL/GenBank/DDBJ databases">
        <title>Complete sequence of chromosome 1 of Burkholderia cenocepacia AU 1054.</title>
        <authorList>
            <consortium name="US DOE Joint Genome Institute"/>
            <person name="Copeland A."/>
            <person name="Lucas S."/>
            <person name="Lapidus A."/>
            <person name="Barry K."/>
            <person name="Detter J.C."/>
            <person name="Glavina del Rio T."/>
            <person name="Hammon N."/>
            <person name="Israni S."/>
            <person name="Dalin E."/>
            <person name="Tice H."/>
            <person name="Pitluck S."/>
            <person name="Chain P."/>
            <person name="Malfatti S."/>
            <person name="Shin M."/>
            <person name="Vergez L."/>
            <person name="Schmutz J."/>
            <person name="Larimer F."/>
            <person name="Land M."/>
            <person name="Hauser L."/>
            <person name="Kyrpides N."/>
            <person name="Lykidis A."/>
            <person name="LiPuma J.J."/>
            <person name="Konstantinidis K."/>
            <person name="Tiedje J.M."/>
            <person name="Richardson P."/>
        </authorList>
    </citation>
    <scope>NUCLEOTIDE SEQUENCE [LARGE SCALE GENOMIC DNA]</scope>
    <source>
        <strain>AU 1054</strain>
    </source>
</reference>
<protein>
    <recommendedName>
        <fullName evidence="1">Large ribosomal subunit protein uL16</fullName>
    </recommendedName>
    <alternativeName>
        <fullName evidence="3">50S ribosomal protein L16</fullName>
    </alternativeName>
</protein>
<dbReference type="EMBL" id="CP000378">
    <property type="protein sequence ID" value="ABF77650.1"/>
    <property type="molecule type" value="Genomic_DNA"/>
</dbReference>
<dbReference type="SMR" id="Q1BRV5"/>
<dbReference type="HOGENOM" id="CLU_078858_2_1_4"/>
<dbReference type="GO" id="GO:0022625">
    <property type="term" value="C:cytosolic large ribosomal subunit"/>
    <property type="evidence" value="ECO:0007669"/>
    <property type="project" value="TreeGrafter"/>
</dbReference>
<dbReference type="GO" id="GO:0019843">
    <property type="term" value="F:rRNA binding"/>
    <property type="evidence" value="ECO:0007669"/>
    <property type="project" value="UniProtKB-UniRule"/>
</dbReference>
<dbReference type="GO" id="GO:0003735">
    <property type="term" value="F:structural constituent of ribosome"/>
    <property type="evidence" value="ECO:0007669"/>
    <property type="project" value="InterPro"/>
</dbReference>
<dbReference type="GO" id="GO:0000049">
    <property type="term" value="F:tRNA binding"/>
    <property type="evidence" value="ECO:0007669"/>
    <property type="project" value="UniProtKB-KW"/>
</dbReference>
<dbReference type="GO" id="GO:0006412">
    <property type="term" value="P:translation"/>
    <property type="evidence" value="ECO:0007669"/>
    <property type="project" value="UniProtKB-UniRule"/>
</dbReference>
<dbReference type="CDD" id="cd01433">
    <property type="entry name" value="Ribosomal_L16_L10e"/>
    <property type="match status" value="1"/>
</dbReference>
<dbReference type="FunFam" id="3.90.1170.10:FF:000001">
    <property type="entry name" value="50S ribosomal protein L16"/>
    <property type="match status" value="1"/>
</dbReference>
<dbReference type="Gene3D" id="3.90.1170.10">
    <property type="entry name" value="Ribosomal protein L10e/L16"/>
    <property type="match status" value="1"/>
</dbReference>
<dbReference type="HAMAP" id="MF_01342">
    <property type="entry name" value="Ribosomal_uL16"/>
    <property type="match status" value="1"/>
</dbReference>
<dbReference type="InterPro" id="IPR047873">
    <property type="entry name" value="Ribosomal_uL16"/>
</dbReference>
<dbReference type="InterPro" id="IPR000114">
    <property type="entry name" value="Ribosomal_uL16_bact-type"/>
</dbReference>
<dbReference type="InterPro" id="IPR020798">
    <property type="entry name" value="Ribosomal_uL16_CS"/>
</dbReference>
<dbReference type="InterPro" id="IPR016180">
    <property type="entry name" value="Ribosomal_uL16_dom"/>
</dbReference>
<dbReference type="InterPro" id="IPR036920">
    <property type="entry name" value="Ribosomal_uL16_sf"/>
</dbReference>
<dbReference type="NCBIfam" id="TIGR01164">
    <property type="entry name" value="rplP_bact"/>
    <property type="match status" value="1"/>
</dbReference>
<dbReference type="PANTHER" id="PTHR12220">
    <property type="entry name" value="50S/60S RIBOSOMAL PROTEIN L16"/>
    <property type="match status" value="1"/>
</dbReference>
<dbReference type="PANTHER" id="PTHR12220:SF13">
    <property type="entry name" value="LARGE RIBOSOMAL SUBUNIT PROTEIN UL16M"/>
    <property type="match status" value="1"/>
</dbReference>
<dbReference type="Pfam" id="PF00252">
    <property type="entry name" value="Ribosomal_L16"/>
    <property type="match status" value="1"/>
</dbReference>
<dbReference type="PRINTS" id="PR00060">
    <property type="entry name" value="RIBOSOMALL16"/>
</dbReference>
<dbReference type="SUPFAM" id="SSF54686">
    <property type="entry name" value="Ribosomal protein L16p/L10e"/>
    <property type="match status" value="1"/>
</dbReference>
<dbReference type="PROSITE" id="PS00586">
    <property type="entry name" value="RIBOSOMAL_L16_1"/>
    <property type="match status" value="1"/>
</dbReference>
<evidence type="ECO:0000255" key="1">
    <source>
        <dbReference type="HAMAP-Rule" id="MF_01342"/>
    </source>
</evidence>
<evidence type="ECO:0000256" key="2">
    <source>
        <dbReference type="SAM" id="MobiDB-lite"/>
    </source>
</evidence>
<evidence type="ECO:0000305" key="3"/>
<gene>
    <name evidence="1" type="primary">rplP</name>
    <name type="ordered locus">Bcen_2752</name>
</gene>
<comment type="function">
    <text evidence="1">Binds 23S rRNA and is also seen to make contacts with the A and possibly P site tRNAs.</text>
</comment>
<comment type="subunit">
    <text evidence="1">Part of the 50S ribosomal subunit.</text>
</comment>
<comment type="similarity">
    <text evidence="1">Belongs to the universal ribosomal protein uL16 family.</text>
</comment>
<feature type="chain" id="PRO_0000251620" description="Large ribosomal subunit protein uL16">
    <location>
        <begin position="1"/>
        <end position="138"/>
    </location>
</feature>
<feature type="region of interest" description="Disordered" evidence="2">
    <location>
        <begin position="1"/>
        <end position="24"/>
    </location>
</feature>
<feature type="compositionally biased region" description="Basic residues" evidence="2">
    <location>
        <begin position="1"/>
        <end position="13"/>
    </location>
</feature>
<keyword id="KW-0687">Ribonucleoprotein</keyword>
<keyword id="KW-0689">Ribosomal protein</keyword>
<keyword id="KW-0694">RNA-binding</keyword>
<keyword id="KW-0699">rRNA-binding</keyword>
<keyword id="KW-0820">tRNA-binding</keyword>
<proteinExistence type="inferred from homology"/>
<name>RL16_BURO1</name>
<accession>Q1BRV5</accession>
<organism>
    <name type="scientific">Burkholderia orbicola (strain AU 1054)</name>
    <dbReference type="NCBI Taxonomy" id="331271"/>
    <lineage>
        <taxon>Bacteria</taxon>
        <taxon>Pseudomonadati</taxon>
        <taxon>Pseudomonadota</taxon>
        <taxon>Betaproteobacteria</taxon>
        <taxon>Burkholderiales</taxon>
        <taxon>Burkholderiaceae</taxon>
        <taxon>Burkholderia</taxon>
        <taxon>Burkholderia cepacia complex</taxon>
        <taxon>Burkholderia orbicola</taxon>
    </lineage>
</organism>